<dbReference type="EMBL" id="CP000356">
    <property type="protein sequence ID" value="ABF54509.1"/>
    <property type="molecule type" value="Genomic_DNA"/>
</dbReference>
<dbReference type="RefSeq" id="WP_011543074.1">
    <property type="nucleotide sequence ID" value="NC_008048.1"/>
</dbReference>
<dbReference type="SMR" id="Q1GPB3"/>
<dbReference type="STRING" id="317655.Sala_2804"/>
<dbReference type="KEGG" id="sal:Sala_2804"/>
<dbReference type="eggNOG" id="COG0096">
    <property type="taxonomic scope" value="Bacteria"/>
</dbReference>
<dbReference type="HOGENOM" id="CLU_098428_0_0_5"/>
<dbReference type="OrthoDB" id="9802617at2"/>
<dbReference type="Proteomes" id="UP000006578">
    <property type="component" value="Chromosome"/>
</dbReference>
<dbReference type="GO" id="GO:1990904">
    <property type="term" value="C:ribonucleoprotein complex"/>
    <property type="evidence" value="ECO:0007669"/>
    <property type="project" value="UniProtKB-KW"/>
</dbReference>
<dbReference type="GO" id="GO:0005840">
    <property type="term" value="C:ribosome"/>
    <property type="evidence" value="ECO:0007669"/>
    <property type="project" value="UniProtKB-KW"/>
</dbReference>
<dbReference type="GO" id="GO:0019843">
    <property type="term" value="F:rRNA binding"/>
    <property type="evidence" value="ECO:0007669"/>
    <property type="project" value="UniProtKB-UniRule"/>
</dbReference>
<dbReference type="GO" id="GO:0003735">
    <property type="term" value="F:structural constituent of ribosome"/>
    <property type="evidence" value="ECO:0007669"/>
    <property type="project" value="InterPro"/>
</dbReference>
<dbReference type="GO" id="GO:0006412">
    <property type="term" value="P:translation"/>
    <property type="evidence" value="ECO:0007669"/>
    <property type="project" value="UniProtKB-UniRule"/>
</dbReference>
<dbReference type="FunFam" id="3.30.1490.10:FF:000001">
    <property type="entry name" value="30S ribosomal protein S8"/>
    <property type="match status" value="1"/>
</dbReference>
<dbReference type="Gene3D" id="3.30.1370.30">
    <property type="match status" value="1"/>
</dbReference>
<dbReference type="Gene3D" id="3.30.1490.10">
    <property type="match status" value="1"/>
</dbReference>
<dbReference type="HAMAP" id="MF_01302_B">
    <property type="entry name" value="Ribosomal_uS8_B"/>
    <property type="match status" value="1"/>
</dbReference>
<dbReference type="InterPro" id="IPR000630">
    <property type="entry name" value="Ribosomal_uS8"/>
</dbReference>
<dbReference type="InterPro" id="IPR047863">
    <property type="entry name" value="Ribosomal_uS8_CS"/>
</dbReference>
<dbReference type="InterPro" id="IPR035987">
    <property type="entry name" value="Ribosomal_uS8_sf"/>
</dbReference>
<dbReference type="NCBIfam" id="NF001109">
    <property type="entry name" value="PRK00136.1"/>
    <property type="match status" value="1"/>
</dbReference>
<dbReference type="PANTHER" id="PTHR11758">
    <property type="entry name" value="40S RIBOSOMAL PROTEIN S15A"/>
    <property type="match status" value="1"/>
</dbReference>
<dbReference type="Pfam" id="PF00410">
    <property type="entry name" value="Ribosomal_S8"/>
    <property type="match status" value="1"/>
</dbReference>
<dbReference type="SUPFAM" id="SSF56047">
    <property type="entry name" value="Ribosomal protein S8"/>
    <property type="match status" value="1"/>
</dbReference>
<dbReference type="PROSITE" id="PS00053">
    <property type="entry name" value="RIBOSOMAL_S8"/>
    <property type="match status" value="1"/>
</dbReference>
<sequence length="134" mass="14699">MAMTDPLGDMLTRIRNGQQAKKDSVLTPASTLRVRVLDVLQREGYIRGYSEEALGAKGQHKGIRIELKYFEGQPAIRHVARVSKPGRRVYSGSKELPIVRNGLGITIVSTPRGVLSDAEAREQNVGGEVLAEVF</sequence>
<name>RS8_SPHAL</name>
<keyword id="KW-1185">Reference proteome</keyword>
<keyword id="KW-0687">Ribonucleoprotein</keyword>
<keyword id="KW-0689">Ribosomal protein</keyword>
<keyword id="KW-0694">RNA-binding</keyword>
<keyword id="KW-0699">rRNA-binding</keyword>
<evidence type="ECO:0000255" key="1">
    <source>
        <dbReference type="HAMAP-Rule" id="MF_01302"/>
    </source>
</evidence>
<evidence type="ECO:0000305" key="2"/>
<gene>
    <name evidence="1" type="primary">rpsH</name>
    <name type="ordered locus">Sala_2804</name>
</gene>
<reference key="1">
    <citation type="journal article" date="2009" name="Proc. Natl. Acad. Sci. U.S.A.">
        <title>The genomic basis of trophic strategy in marine bacteria.</title>
        <authorList>
            <person name="Lauro F.M."/>
            <person name="McDougald D."/>
            <person name="Thomas T."/>
            <person name="Williams T.J."/>
            <person name="Egan S."/>
            <person name="Rice S."/>
            <person name="DeMaere M.Z."/>
            <person name="Ting L."/>
            <person name="Ertan H."/>
            <person name="Johnson J."/>
            <person name="Ferriera S."/>
            <person name="Lapidus A."/>
            <person name="Anderson I."/>
            <person name="Kyrpides N."/>
            <person name="Munk A.C."/>
            <person name="Detter C."/>
            <person name="Han C.S."/>
            <person name="Brown M.V."/>
            <person name="Robb F.T."/>
            <person name="Kjelleberg S."/>
            <person name="Cavicchioli R."/>
        </authorList>
    </citation>
    <scope>NUCLEOTIDE SEQUENCE [LARGE SCALE GENOMIC DNA]</scope>
    <source>
        <strain>DSM 13593 / LMG 18877 / RB2256</strain>
    </source>
</reference>
<accession>Q1GPB3</accession>
<feature type="chain" id="PRO_0000290937" description="Small ribosomal subunit protein uS8">
    <location>
        <begin position="1"/>
        <end position="134"/>
    </location>
</feature>
<organism>
    <name type="scientific">Sphingopyxis alaskensis (strain DSM 13593 / LMG 18877 / RB2256)</name>
    <name type="common">Sphingomonas alaskensis</name>
    <dbReference type="NCBI Taxonomy" id="317655"/>
    <lineage>
        <taxon>Bacteria</taxon>
        <taxon>Pseudomonadati</taxon>
        <taxon>Pseudomonadota</taxon>
        <taxon>Alphaproteobacteria</taxon>
        <taxon>Sphingomonadales</taxon>
        <taxon>Sphingomonadaceae</taxon>
        <taxon>Sphingopyxis</taxon>
    </lineage>
</organism>
<comment type="function">
    <text evidence="1">One of the primary rRNA binding proteins, it binds directly to 16S rRNA central domain where it helps coordinate assembly of the platform of the 30S subunit.</text>
</comment>
<comment type="subunit">
    <text evidence="1">Part of the 30S ribosomal subunit. Contacts proteins S5 and S12.</text>
</comment>
<comment type="similarity">
    <text evidence="1">Belongs to the universal ribosomal protein uS8 family.</text>
</comment>
<proteinExistence type="inferred from homology"/>
<protein>
    <recommendedName>
        <fullName evidence="1">Small ribosomal subunit protein uS8</fullName>
    </recommendedName>
    <alternativeName>
        <fullName evidence="2">30S ribosomal protein S8</fullName>
    </alternativeName>
</protein>